<reference key="1">
    <citation type="journal article" date="1990" name="Nucleic Acids Res.">
        <title>Nucleotide sequence of the infectious cloned DNA components of African cassava mosaic virus (Nigerian strain).</title>
        <authorList>
            <person name="Morris B."/>
            <person name="Coates L."/>
            <person name="Lowe S."/>
            <person name="Richardson K."/>
            <person name="Eddy P."/>
        </authorList>
    </citation>
    <scope>NUCLEOTIDE SEQUENCE [GENOMIC DNA]</scope>
</reference>
<accession>P14972</accession>
<gene>
    <name type="ORF">AC1</name>
    <name type="ORF">AL1</name>
</gene>
<proteinExistence type="inferred from homology"/>
<comment type="function">
    <text evidence="1">Essential for the replication of viral ssDNA. The closed circular ssDNA genome is first converted to a superhelical dsDNA. Rep binds a specific region at the genome origin of replication. It introduces an endonucleolytic nick within the conserved sequence 5'-TAATATTAC-3' in the intergenic region of the genome present in all geminiviruses, thereby initiating the rolling circle replication (RCR). Following cleavage, binds covalently to the 5'-phosphate of DNA as a tyrosyl ester. The cleavage gives rise to a free 3'-OH that serves as a primer for the cellular DNA polymerase. The polymerase synthesizes the (+) strand DNA by rolling circle mechanism. After one round of replication, a Rep-catalyzed nucleotidyl transfer reaction releases a circular single-stranded virus genome, thereby terminating the replication. Displays origin-specific DNA cleavage, nucleotidyl transferase, ATPase and helicase activities (By similarity).</text>
</comment>
<comment type="cofactor">
    <cofactor evidence="3">
        <name>Mg(2+)</name>
        <dbReference type="ChEBI" id="CHEBI:18420"/>
    </cofactor>
    <cofactor evidence="3">
        <name>Mn(2+)</name>
        <dbReference type="ChEBI" id="CHEBI:29035"/>
    </cofactor>
    <text evidence="3">Divalent metal cations, possibly Mg(2+) or Mn(2+).</text>
</comment>
<comment type="subunit">
    <text evidence="1">Homooligomer. Interacts with the replication enhancer protein (REn). Interacts with host retinoblastoma-related protein 1 (RBR1), and may thereby induce the transcription of host replicative enzymes even if the cell is not dividing anymore. Interacts with host PCNA. Interacts with host SCE1 protein (By similarity).</text>
</comment>
<comment type="subcellular location">
    <subcellularLocation>
        <location evidence="1">Host nucleus</location>
    </subcellularLocation>
</comment>
<comment type="domain">
    <text evidence="1">There are 3 rolling circle replication (RCR) motifs. RCR-2 is probably involved in metal coordination. RCR-3 is required for phosphodiester bond cleavage for initiation of RCR (By similarity).</text>
</comment>
<comment type="similarity">
    <text evidence="4">Belongs to the geminiviridae Rep protein family.</text>
</comment>
<evidence type="ECO:0000250" key="1"/>
<evidence type="ECO:0000255" key="2"/>
<evidence type="ECO:0000255" key="3">
    <source>
        <dbReference type="PROSITE-ProRule" id="PRU01364"/>
    </source>
</evidence>
<evidence type="ECO:0000305" key="4"/>
<feature type="chain" id="PRO_0000222204" description="Replication-associated protein">
    <location>
        <begin position="1"/>
        <end position="358"/>
    </location>
</feature>
<feature type="domain" description="CRESS-DNA virus Rep endonuclease" evidence="3">
    <location>
        <begin position="7"/>
        <end position="115"/>
    </location>
</feature>
<feature type="region of interest" description="Binding to RBR1" evidence="1">
    <location>
        <begin position="142"/>
        <end position="152"/>
    </location>
</feature>
<feature type="region of interest" description="Oligomerization" evidence="1">
    <location>
        <begin position="155"/>
        <end position="175"/>
    </location>
</feature>
<feature type="short sequence motif" description="RCR-1" evidence="3">
    <location>
        <begin position="14"/>
        <end position="17"/>
    </location>
</feature>
<feature type="short sequence motif" description="RCR-2" evidence="3">
    <location>
        <begin position="56"/>
        <end position="58"/>
    </location>
</feature>
<feature type="short sequence motif" description="RCR-3" evidence="3">
    <location>
        <begin position="102"/>
        <end position="105"/>
    </location>
</feature>
<feature type="active site" description="For DNA cleavage activity" evidence="3">
    <location>
        <position position="102"/>
    </location>
</feature>
<feature type="binding site" evidence="3">
    <location>
        <position position="48"/>
    </location>
    <ligand>
        <name>a divalent metal cation</name>
        <dbReference type="ChEBI" id="CHEBI:60240"/>
    </ligand>
</feature>
<feature type="binding site" evidence="3">
    <location>
        <position position="56"/>
    </location>
    <ligand>
        <name>a divalent metal cation</name>
        <dbReference type="ChEBI" id="CHEBI:60240"/>
    </ligand>
</feature>
<feature type="binding site" evidence="3">
    <location>
        <position position="58"/>
    </location>
    <ligand>
        <name>a divalent metal cation</name>
        <dbReference type="ChEBI" id="CHEBI:60240"/>
    </ligand>
</feature>
<feature type="binding site" evidence="3">
    <location>
        <position position="106"/>
    </location>
    <ligand>
        <name>a divalent metal cation</name>
        <dbReference type="ChEBI" id="CHEBI:60240"/>
    </ligand>
</feature>
<feature type="binding site" evidence="2">
    <location>
        <begin position="220"/>
        <end position="227"/>
    </location>
    <ligand>
        <name>ATP</name>
        <dbReference type="ChEBI" id="CHEBI:30616"/>
    </ligand>
</feature>
<organismHost>
    <name type="scientific">Hewittia sublobata</name>
    <dbReference type="NCBI Taxonomy" id="197394"/>
</organismHost>
<organismHost>
    <name type="scientific">Jatropha multifida</name>
    <name type="common">Coralbush</name>
    <dbReference type="NCBI Taxonomy" id="3996"/>
</organismHost>
<organismHost>
    <name type="scientific">Laportea</name>
    <dbReference type="NCBI Taxonomy" id="194268"/>
</organismHost>
<organismHost>
    <name type="scientific">Manihot esculenta</name>
    <name type="common">Cassava</name>
    <name type="synonym">Jatropha manihot</name>
    <dbReference type="NCBI Taxonomy" id="3983"/>
</organismHost>
<sequence>MRTPRFRVQAKNVFLTYPNCSIPKEHLLSFIQTLSLPSNPKFIKICRELHQNGEPHLHALIQFEGKITITNNRLFDCVHPSCSTNFHPNIQGAKSSSDVKSYLDKDGDTVEWGQFQIDGRSARGGQQSANDAYAKALNSGSKSEALNVIRELVPKDFVLQFHNLNSNLDRIFQEPPAPYVSPFPCSSFDQVPDELEEWVADNVRDSAARPWRPNSIVIEGDSRTGKTIWARSLGPHNYLCGHLDLSPKVFNNDAWYNVIDDVDPHYLKHFKEFMGSQRDWQSNTKYGKPVQIKGGIPTIFLCNPGPTSSYKEFLDEEKQEALKAWALKNAIFITLTEPLYSGSNQSQSQTIQEASHPA</sequence>
<dbReference type="EC" id="2.7.7.-"/>
<dbReference type="EC" id="3.1.21.-"/>
<dbReference type="EMBL" id="X17095">
    <property type="protein sequence ID" value="CAA34953.1"/>
    <property type="molecule type" value="Genomic_DNA"/>
</dbReference>
<dbReference type="PIR" id="S07594">
    <property type="entry name" value="S07594"/>
</dbReference>
<dbReference type="SMR" id="P14972"/>
<dbReference type="Proteomes" id="UP000008453">
    <property type="component" value="Genome"/>
</dbReference>
<dbReference type="GO" id="GO:0042025">
    <property type="term" value="C:host cell nucleus"/>
    <property type="evidence" value="ECO:0007669"/>
    <property type="project" value="UniProtKB-SubCell"/>
</dbReference>
<dbReference type="GO" id="GO:0005524">
    <property type="term" value="F:ATP binding"/>
    <property type="evidence" value="ECO:0007669"/>
    <property type="project" value="UniProtKB-KW"/>
</dbReference>
<dbReference type="GO" id="GO:0003677">
    <property type="term" value="F:DNA binding"/>
    <property type="evidence" value="ECO:0007669"/>
    <property type="project" value="UniProtKB-KW"/>
</dbReference>
<dbReference type="GO" id="GO:0016888">
    <property type="term" value="F:endodeoxyribonuclease activity, producing 5'-phosphomonoesters"/>
    <property type="evidence" value="ECO:0007669"/>
    <property type="project" value="InterPro"/>
</dbReference>
<dbReference type="GO" id="GO:0004386">
    <property type="term" value="F:helicase activity"/>
    <property type="evidence" value="ECO:0007669"/>
    <property type="project" value="UniProtKB-KW"/>
</dbReference>
<dbReference type="GO" id="GO:0046872">
    <property type="term" value="F:metal ion binding"/>
    <property type="evidence" value="ECO:0007669"/>
    <property type="project" value="UniProtKB-KW"/>
</dbReference>
<dbReference type="GO" id="GO:0016779">
    <property type="term" value="F:nucleotidyltransferase activity"/>
    <property type="evidence" value="ECO:0007669"/>
    <property type="project" value="UniProtKB-KW"/>
</dbReference>
<dbReference type="GO" id="GO:0005198">
    <property type="term" value="F:structural molecule activity"/>
    <property type="evidence" value="ECO:0007669"/>
    <property type="project" value="InterPro"/>
</dbReference>
<dbReference type="GO" id="GO:0006260">
    <property type="term" value="P:DNA replication"/>
    <property type="evidence" value="ECO:0007669"/>
    <property type="project" value="UniProtKB-KW"/>
</dbReference>
<dbReference type="Gene3D" id="3.40.1310.20">
    <property type="match status" value="1"/>
</dbReference>
<dbReference type="InterPro" id="IPR049912">
    <property type="entry name" value="CRESS_DNA_REP"/>
</dbReference>
<dbReference type="InterPro" id="IPR001301">
    <property type="entry name" value="Gemini_AL1_CLV"/>
</dbReference>
<dbReference type="InterPro" id="IPR001191">
    <property type="entry name" value="Gemini_AL1_REP"/>
</dbReference>
<dbReference type="InterPro" id="IPR022692">
    <property type="entry name" value="Gemini_AL1_REP_central"/>
</dbReference>
<dbReference type="Pfam" id="PF00799">
    <property type="entry name" value="Gemini_AL1"/>
    <property type="match status" value="1"/>
</dbReference>
<dbReference type="Pfam" id="PF08283">
    <property type="entry name" value="Gemini_AL1_M"/>
    <property type="match status" value="1"/>
</dbReference>
<dbReference type="PRINTS" id="PR00227">
    <property type="entry name" value="GEMCOATAL1"/>
</dbReference>
<dbReference type="PRINTS" id="PR00228">
    <property type="entry name" value="GEMCOATCLVL1"/>
</dbReference>
<dbReference type="SUPFAM" id="SSF55464">
    <property type="entry name" value="Origin of replication-binding domain, RBD-like"/>
    <property type="match status" value="1"/>
</dbReference>
<dbReference type="PROSITE" id="PS52020">
    <property type="entry name" value="CRESS_DNA_REP"/>
    <property type="match status" value="1"/>
</dbReference>
<protein>
    <recommendedName>
        <fullName>Replication-associated protein</fullName>
        <shortName>Rep</shortName>
        <ecNumber>2.7.7.-</ecNumber>
        <ecNumber>3.1.21.-</ecNumber>
    </recommendedName>
    <alternativeName>
        <fullName>40.4 kDa protein</fullName>
    </alternativeName>
    <alternativeName>
        <fullName>Protein AC1</fullName>
    </alternativeName>
    <alternativeName>
        <fullName>Protein AL1</fullName>
    </alternativeName>
</protein>
<organism>
    <name type="scientific">African cassava mosaic virus (isolate Nigerian)</name>
    <name type="common">ACMV</name>
    <name type="synonym">Cassava latent virus (isolate Nigerian)</name>
    <dbReference type="NCBI Taxonomy" id="222073"/>
    <lineage>
        <taxon>Viruses</taxon>
        <taxon>Monodnaviria</taxon>
        <taxon>Shotokuvirae</taxon>
        <taxon>Cressdnaviricota</taxon>
        <taxon>Repensiviricetes</taxon>
        <taxon>Geplafuvirales</taxon>
        <taxon>Geminiviridae</taxon>
        <taxon>Begomovirus</taxon>
        <taxon>Begomovirus manihotis</taxon>
    </lineage>
</organism>
<name>REP_CLVN</name>
<keyword id="KW-0067">ATP-binding</keyword>
<keyword id="KW-0190">Covalent protein-DNA linkage</keyword>
<keyword id="KW-0235">DNA replication</keyword>
<keyword id="KW-0238">DNA-binding</keyword>
<keyword id="KW-0255">Endonuclease</keyword>
<keyword id="KW-0347">Helicase</keyword>
<keyword id="KW-1048">Host nucleus</keyword>
<keyword id="KW-0945">Host-virus interaction</keyword>
<keyword id="KW-0378">Hydrolase</keyword>
<keyword id="KW-0479">Metal-binding</keyword>
<keyword id="KW-0511">Multifunctional enzyme</keyword>
<keyword id="KW-0540">Nuclease</keyword>
<keyword id="KW-0547">Nucleotide-binding</keyword>
<keyword id="KW-0548">Nucleotidyltransferase</keyword>
<keyword id="KW-1185">Reference proteome</keyword>
<keyword id="KW-0808">Transferase</keyword>